<evidence type="ECO:0000255" key="1">
    <source>
        <dbReference type="HAMAP-Rule" id="MF_00147"/>
    </source>
</evidence>
<organism>
    <name type="scientific">Mycobacterium bovis (strain ATCC BAA-935 / AF2122/97)</name>
    <dbReference type="NCBI Taxonomy" id="233413"/>
    <lineage>
        <taxon>Bacteria</taxon>
        <taxon>Bacillati</taxon>
        <taxon>Actinomycetota</taxon>
        <taxon>Actinomycetes</taxon>
        <taxon>Mycobacteriales</taxon>
        <taxon>Mycobacteriaceae</taxon>
        <taxon>Mycobacterium</taxon>
        <taxon>Mycobacterium tuberculosis complex</taxon>
    </lineage>
</organism>
<reference key="1">
    <citation type="journal article" date="2003" name="Proc. Natl. Acad. Sci. U.S.A.">
        <title>The complete genome sequence of Mycobacterium bovis.</title>
        <authorList>
            <person name="Garnier T."/>
            <person name="Eiglmeier K."/>
            <person name="Camus J.-C."/>
            <person name="Medina N."/>
            <person name="Mansoor H."/>
            <person name="Pryor M."/>
            <person name="Duthoy S."/>
            <person name="Grondin S."/>
            <person name="Lacroix C."/>
            <person name="Monsempe C."/>
            <person name="Simon S."/>
            <person name="Harris B."/>
            <person name="Atkin R."/>
            <person name="Doggett J."/>
            <person name="Mayes R."/>
            <person name="Keating L."/>
            <person name="Wheeler P.R."/>
            <person name="Parkhill J."/>
            <person name="Barrell B.G."/>
            <person name="Cole S.T."/>
            <person name="Gordon S.V."/>
            <person name="Hewinson R.G."/>
        </authorList>
    </citation>
    <scope>NUCLEOTIDE SEQUENCE [LARGE SCALE GENOMIC DNA]</scope>
    <source>
        <strain>ATCC BAA-935 / AF2122/97</strain>
    </source>
</reference>
<reference key="2">
    <citation type="journal article" date="2017" name="Genome Announc.">
        <title>Updated reference genome sequence and annotation of Mycobacterium bovis AF2122/97.</title>
        <authorList>
            <person name="Malone K.M."/>
            <person name="Farrell D."/>
            <person name="Stuber T.P."/>
            <person name="Schubert O.T."/>
            <person name="Aebersold R."/>
            <person name="Robbe-Austerman S."/>
            <person name="Gordon S.V."/>
        </authorList>
    </citation>
    <scope>NUCLEOTIDE SEQUENCE [LARGE SCALE GENOMIC DNA]</scope>
    <scope>GENOME REANNOTATION</scope>
    <source>
        <strain>ATCC BAA-935 / AF2122/97</strain>
    </source>
</reference>
<name>TPIS_MYCBO</name>
<accession>P66941</accession>
<accession>A0A1R3XYR3</accession>
<accession>O08408</accession>
<accession>X2BHY6</accession>
<sequence length="261" mass="27403">MSRKPLIAGNWKMNLNHYEAIALVQKIAFSLPDKYYDRVDVAVIPPFTDLRSVQTLVDGDKLRLTYGAQDLSPHDSGAYTGDVSGAFLAKLGCSYVVVGHSERRTYHNEDDALVAAKAATALKHGLTPIVCIGEHLDVREAGNHVAHNIEQLRGSLAGLLAEQIGSVVIAYEPVWAIGTGRVASAADAQEVCAAIRKELASLASPRIADTVRVLYGGSVNAKNVGDIVAQDDVDGGLVGGASLDGEHFATLAAIAAGGPLP</sequence>
<protein>
    <recommendedName>
        <fullName evidence="1">Triosephosphate isomerase</fullName>
        <shortName evidence="1">TIM</shortName>
        <shortName evidence="1">TPI</shortName>
        <ecNumber evidence="1">5.3.1.1</ecNumber>
    </recommendedName>
    <alternativeName>
        <fullName evidence="1">Triose-phosphate isomerase</fullName>
    </alternativeName>
</protein>
<feature type="chain" id="PRO_0000090257" description="Triosephosphate isomerase">
    <location>
        <begin position="1"/>
        <end position="261"/>
    </location>
</feature>
<feature type="active site" description="Electrophile" evidence="1">
    <location>
        <position position="100"/>
    </location>
</feature>
<feature type="active site" description="Proton acceptor" evidence="1">
    <location>
        <position position="172"/>
    </location>
</feature>
<feature type="binding site" evidence="1">
    <location>
        <begin position="10"/>
        <end position="12"/>
    </location>
    <ligand>
        <name>substrate</name>
    </ligand>
</feature>
<feature type="binding site" evidence="1">
    <location>
        <position position="178"/>
    </location>
    <ligand>
        <name>substrate</name>
    </ligand>
</feature>
<feature type="binding site" evidence="1">
    <location>
        <position position="218"/>
    </location>
    <ligand>
        <name>substrate</name>
    </ligand>
</feature>
<feature type="binding site" evidence="1">
    <location>
        <begin position="239"/>
        <end position="240"/>
    </location>
    <ligand>
        <name>substrate</name>
    </ligand>
</feature>
<proteinExistence type="inferred from homology"/>
<dbReference type="EC" id="5.3.1.1" evidence="1"/>
<dbReference type="EMBL" id="LT708304">
    <property type="protein sequence ID" value="SIU00076.1"/>
    <property type="molecule type" value="Genomic_DNA"/>
</dbReference>
<dbReference type="RefSeq" id="NP_855125.1">
    <property type="nucleotide sequence ID" value="NC_002945.3"/>
</dbReference>
<dbReference type="RefSeq" id="WP_003407398.1">
    <property type="nucleotide sequence ID" value="NC_002945.4"/>
</dbReference>
<dbReference type="SMR" id="P66941"/>
<dbReference type="KEGG" id="mbo:BQ2027_MB1473"/>
<dbReference type="PATRIC" id="fig|233413.5.peg.1607"/>
<dbReference type="UniPathway" id="UPA00109">
    <property type="reaction ID" value="UER00189"/>
</dbReference>
<dbReference type="UniPathway" id="UPA00138"/>
<dbReference type="Proteomes" id="UP000001419">
    <property type="component" value="Chromosome"/>
</dbReference>
<dbReference type="GO" id="GO:0005829">
    <property type="term" value="C:cytosol"/>
    <property type="evidence" value="ECO:0007669"/>
    <property type="project" value="TreeGrafter"/>
</dbReference>
<dbReference type="GO" id="GO:0004807">
    <property type="term" value="F:triose-phosphate isomerase activity"/>
    <property type="evidence" value="ECO:0007669"/>
    <property type="project" value="UniProtKB-UniRule"/>
</dbReference>
<dbReference type="GO" id="GO:0006094">
    <property type="term" value="P:gluconeogenesis"/>
    <property type="evidence" value="ECO:0007669"/>
    <property type="project" value="UniProtKB-UniRule"/>
</dbReference>
<dbReference type="GO" id="GO:0046166">
    <property type="term" value="P:glyceraldehyde-3-phosphate biosynthetic process"/>
    <property type="evidence" value="ECO:0007669"/>
    <property type="project" value="TreeGrafter"/>
</dbReference>
<dbReference type="GO" id="GO:0019563">
    <property type="term" value="P:glycerol catabolic process"/>
    <property type="evidence" value="ECO:0007669"/>
    <property type="project" value="TreeGrafter"/>
</dbReference>
<dbReference type="GO" id="GO:0006096">
    <property type="term" value="P:glycolytic process"/>
    <property type="evidence" value="ECO:0007669"/>
    <property type="project" value="UniProtKB-UniRule"/>
</dbReference>
<dbReference type="CDD" id="cd00311">
    <property type="entry name" value="TIM"/>
    <property type="match status" value="1"/>
</dbReference>
<dbReference type="FunFam" id="3.20.20.70:FF:000020">
    <property type="entry name" value="Triosephosphate isomerase"/>
    <property type="match status" value="1"/>
</dbReference>
<dbReference type="Gene3D" id="3.20.20.70">
    <property type="entry name" value="Aldolase class I"/>
    <property type="match status" value="1"/>
</dbReference>
<dbReference type="HAMAP" id="MF_00147_B">
    <property type="entry name" value="TIM_B"/>
    <property type="match status" value="1"/>
</dbReference>
<dbReference type="InterPro" id="IPR013785">
    <property type="entry name" value="Aldolase_TIM"/>
</dbReference>
<dbReference type="InterPro" id="IPR035990">
    <property type="entry name" value="TIM_sf"/>
</dbReference>
<dbReference type="InterPro" id="IPR022896">
    <property type="entry name" value="TrioseP_Isoase_bac/euk"/>
</dbReference>
<dbReference type="InterPro" id="IPR000652">
    <property type="entry name" value="Triosephosphate_isomerase"/>
</dbReference>
<dbReference type="InterPro" id="IPR020861">
    <property type="entry name" value="Triosephosphate_isomerase_AS"/>
</dbReference>
<dbReference type="NCBIfam" id="TIGR00419">
    <property type="entry name" value="tim"/>
    <property type="match status" value="1"/>
</dbReference>
<dbReference type="PANTHER" id="PTHR21139">
    <property type="entry name" value="TRIOSEPHOSPHATE ISOMERASE"/>
    <property type="match status" value="1"/>
</dbReference>
<dbReference type="PANTHER" id="PTHR21139:SF42">
    <property type="entry name" value="TRIOSEPHOSPHATE ISOMERASE"/>
    <property type="match status" value="1"/>
</dbReference>
<dbReference type="Pfam" id="PF00121">
    <property type="entry name" value="TIM"/>
    <property type="match status" value="1"/>
</dbReference>
<dbReference type="SUPFAM" id="SSF51351">
    <property type="entry name" value="Triosephosphate isomerase (TIM)"/>
    <property type="match status" value="1"/>
</dbReference>
<dbReference type="PROSITE" id="PS00171">
    <property type="entry name" value="TIM_1"/>
    <property type="match status" value="1"/>
</dbReference>
<dbReference type="PROSITE" id="PS51440">
    <property type="entry name" value="TIM_2"/>
    <property type="match status" value="1"/>
</dbReference>
<comment type="function">
    <text evidence="1">Involved in the gluconeogenesis. Catalyzes stereospecifically the conversion of dihydroxyacetone phosphate (DHAP) to D-glyceraldehyde-3-phosphate (G3P).</text>
</comment>
<comment type="catalytic activity">
    <reaction evidence="1">
        <text>D-glyceraldehyde 3-phosphate = dihydroxyacetone phosphate</text>
        <dbReference type="Rhea" id="RHEA:18585"/>
        <dbReference type="ChEBI" id="CHEBI:57642"/>
        <dbReference type="ChEBI" id="CHEBI:59776"/>
        <dbReference type="EC" id="5.3.1.1"/>
    </reaction>
</comment>
<comment type="pathway">
    <text evidence="1">Carbohydrate biosynthesis; gluconeogenesis.</text>
</comment>
<comment type="pathway">
    <text evidence="1">Carbohydrate degradation; glycolysis; D-glyceraldehyde 3-phosphate from glycerone phosphate: step 1/1.</text>
</comment>
<comment type="subunit">
    <text evidence="1">Homodimer.</text>
</comment>
<comment type="subcellular location">
    <subcellularLocation>
        <location evidence="1">Cytoplasm</location>
    </subcellularLocation>
</comment>
<comment type="similarity">
    <text evidence="1">Belongs to the triosephosphate isomerase family.</text>
</comment>
<keyword id="KW-0963">Cytoplasm</keyword>
<keyword id="KW-0312">Gluconeogenesis</keyword>
<keyword id="KW-0324">Glycolysis</keyword>
<keyword id="KW-0413">Isomerase</keyword>
<keyword id="KW-1185">Reference proteome</keyword>
<gene>
    <name evidence="1" type="primary">tpiA</name>
    <name type="synonym">tpi</name>
    <name type="ordered locus">BQ2027_MB1473</name>
</gene>